<keyword id="KW-0067">ATP-binding</keyword>
<keyword id="KW-0963">Cytoplasm</keyword>
<keyword id="KW-0227">DNA damage</keyword>
<keyword id="KW-0234">DNA repair</keyword>
<keyword id="KW-0235">DNA replication</keyword>
<keyword id="KW-0238">DNA-binding</keyword>
<keyword id="KW-0547">Nucleotide-binding</keyword>
<keyword id="KW-1185">Reference proteome</keyword>
<keyword id="KW-0742">SOS response</keyword>
<protein>
    <recommendedName>
        <fullName evidence="1">DNA replication and repair protein RecF</fullName>
    </recommendedName>
</protein>
<feature type="chain" id="PRO_1000048561" description="DNA replication and repair protein RecF">
    <location>
        <begin position="1"/>
        <end position="359"/>
    </location>
</feature>
<feature type="binding site" evidence="1">
    <location>
        <begin position="30"/>
        <end position="37"/>
    </location>
    <ligand>
        <name>ATP</name>
        <dbReference type="ChEBI" id="CHEBI:30616"/>
    </ligand>
</feature>
<reference key="1">
    <citation type="journal article" date="2008" name="BMC Genomics">
        <title>Genomics of an extreme psychrophile, Psychromonas ingrahamii.</title>
        <authorList>
            <person name="Riley M."/>
            <person name="Staley J.T."/>
            <person name="Danchin A."/>
            <person name="Wang T.Z."/>
            <person name="Brettin T.S."/>
            <person name="Hauser L.J."/>
            <person name="Land M.L."/>
            <person name="Thompson L.S."/>
        </authorList>
    </citation>
    <scope>NUCLEOTIDE SEQUENCE [LARGE SCALE GENOMIC DNA]</scope>
    <source>
        <strain>DSM 17664 / CCUG 51855 / 37</strain>
    </source>
</reference>
<gene>
    <name evidence="1" type="primary">recF</name>
    <name type="ordered locus">Ping_3716</name>
</gene>
<accession>A1T0X6</accession>
<evidence type="ECO:0000255" key="1">
    <source>
        <dbReference type="HAMAP-Rule" id="MF_00365"/>
    </source>
</evidence>
<name>RECF_PSYIN</name>
<proteinExistence type="inferred from homology"/>
<dbReference type="EMBL" id="CP000510">
    <property type="protein sequence ID" value="ABM05391.1"/>
    <property type="molecule type" value="Genomic_DNA"/>
</dbReference>
<dbReference type="RefSeq" id="WP_011771939.1">
    <property type="nucleotide sequence ID" value="NC_008709.1"/>
</dbReference>
<dbReference type="SMR" id="A1T0X6"/>
<dbReference type="STRING" id="357804.Ping_3716"/>
<dbReference type="KEGG" id="pin:Ping_3716"/>
<dbReference type="eggNOG" id="COG1195">
    <property type="taxonomic scope" value="Bacteria"/>
</dbReference>
<dbReference type="HOGENOM" id="CLU_040267_0_0_6"/>
<dbReference type="OrthoDB" id="9803889at2"/>
<dbReference type="Proteomes" id="UP000000639">
    <property type="component" value="Chromosome"/>
</dbReference>
<dbReference type="GO" id="GO:0005737">
    <property type="term" value="C:cytoplasm"/>
    <property type="evidence" value="ECO:0007669"/>
    <property type="project" value="UniProtKB-SubCell"/>
</dbReference>
<dbReference type="GO" id="GO:0005524">
    <property type="term" value="F:ATP binding"/>
    <property type="evidence" value="ECO:0007669"/>
    <property type="project" value="UniProtKB-UniRule"/>
</dbReference>
<dbReference type="GO" id="GO:0003697">
    <property type="term" value="F:single-stranded DNA binding"/>
    <property type="evidence" value="ECO:0007669"/>
    <property type="project" value="UniProtKB-UniRule"/>
</dbReference>
<dbReference type="GO" id="GO:0006260">
    <property type="term" value="P:DNA replication"/>
    <property type="evidence" value="ECO:0007669"/>
    <property type="project" value="UniProtKB-UniRule"/>
</dbReference>
<dbReference type="GO" id="GO:0000731">
    <property type="term" value="P:DNA synthesis involved in DNA repair"/>
    <property type="evidence" value="ECO:0007669"/>
    <property type="project" value="TreeGrafter"/>
</dbReference>
<dbReference type="GO" id="GO:0006302">
    <property type="term" value="P:double-strand break repair"/>
    <property type="evidence" value="ECO:0007669"/>
    <property type="project" value="TreeGrafter"/>
</dbReference>
<dbReference type="GO" id="GO:0009432">
    <property type="term" value="P:SOS response"/>
    <property type="evidence" value="ECO:0007669"/>
    <property type="project" value="UniProtKB-UniRule"/>
</dbReference>
<dbReference type="Gene3D" id="3.40.50.300">
    <property type="entry name" value="P-loop containing nucleotide triphosphate hydrolases"/>
    <property type="match status" value="1"/>
</dbReference>
<dbReference type="Gene3D" id="1.20.1050.90">
    <property type="entry name" value="RecF/RecN/SMC, N-terminal domain"/>
    <property type="match status" value="1"/>
</dbReference>
<dbReference type="HAMAP" id="MF_00365">
    <property type="entry name" value="RecF"/>
    <property type="match status" value="1"/>
</dbReference>
<dbReference type="InterPro" id="IPR001238">
    <property type="entry name" value="DNA-binding_RecF"/>
</dbReference>
<dbReference type="InterPro" id="IPR018078">
    <property type="entry name" value="DNA-binding_RecF_CS"/>
</dbReference>
<dbReference type="InterPro" id="IPR027417">
    <property type="entry name" value="P-loop_NTPase"/>
</dbReference>
<dbReference type="InterPro" id="IPR003395">
    <property type="entry name" value="RecF/RecN/SMC_N"/>
</dbReference>
<dbReference type="InterPro" id="IPR042174">
    <property type="entry name" value="RecF_2"/>
</dbReference>
<dbReference type="NCBIfam" id="TIGR00611">
    <property type="entry name" value="recf"/>
    <property type="match status" value="1"/>
</dbReference>
<dbReference type="PANTHER" id="PTHR32182">
    <property type="entry name" value="DNA REPLICATION AND REPAIR PROTEIN RECF"/>
    <property type="match status" value="1"/>
</dbReference>
<dbReference type="PANTHER" id="PTHR32182:SF0">
    <property type="entry name" value="DNA REPLICATION AND REPAIR PROTEIN RECF"/>
    <property type="match status" value="1"/>
</dbReference>
<dbReference type="Pfam" id="PF02463">
    <property type="entry name" value="SMC_N"/>
    <property type="match status" value="1"/>
</dbReference>
<dbReference type="SUPFAM" id="SSF52540">
    <property type="entry name" value="P-loop containing nucleoside triphosphate hydrolases"/>
    <property type="match status" value="1"/>
</dbReference>
<dbReference type="PROSITE" id="PS00617">
    <property type="entry name" value="RECF_1"/>
    <property type="match status" value="1"/>
</dbReference>
<dbReference type="PROSITE" id="PS00618">
    <property type="entry name" value="RECF_2"/>
    <property type="match status" value="1"/>
</dbReference>
<sequence>MSLSRLIIHQFRNINSATLDFNPKINVVVGPNGSGKTALLEAIYFLGLGRSFRTHLTSRVVEHESKSFTLFSEIQNNNGSIPIGLQKSKSGETLLKINGSYCKKLANLTQYLPLQLITPEGYTLLSGSPKNRRAFLDWGVFYHDPIFYPNWSRIKRLLKQRNAALKQCKTYNELQIWDNELCILSEEISQQREAYFELLMPLVKQTLADFLPDFSITSQFFCGWDKNNKSLQDYLFDNFYRDKQIGYTSAGPQKADLRFKINGIPVSDVLSRGQLKLFVYALRLAQGLFLNSFDNKQCVFLIDDFSSELDQNKQQILAKHIINSNAQIFISVIAAENIDRLFGQEQTVFHVEHGKITVE</sequence>
<comment type="function">
    <text evidence="1">The RecF protein is involved in DNA metabolism; it is required for DNA replication and normal SOS inducibility. RecF binds preferentially to single-stranded, linear DNA. It also seems to bind ATP.</text>
</comment>
<comment type="subcellular location">
    <subcellularLocation>
        <location evidence="1">Cytoplasm</location>
    </subcellularLocation>
</comment>
<comment type="similarity">
    <text evidence="1">Belongs to the RecF family.</text>
</comment>
<organism>
    <name type="scientific">Psychromonas ingrahamii (strain DSM 17664 / CCUG 51855 / 37)</name>
    <dbReference type="NCBI Taxonomy" id="357804"/>
    <lineage>
        <taxon>Bacteria</taxon>
        <taxon>Pseudomonadati</taxon>
        <taxon>Pseudomonadota</taxon>
        <taxon>Gammaproteobacteria</taxon>
        <taxon>Alteromonadales</taxon>
        <taxon>Psychromonadaceae</taxon>
        <taxon>Psychromonas</taxon>
    </lineage>
</organism>